<feature type="chain" id="PRO_0000410050" description="Cytoplasmic tRNA 2-thiolation protein 1">
    <location>
        <begin position="1"/>
        <end position="363"/>
    </location>
</feature>
<feature type="region of interest" description="Disordered" evidence="2">
    <location>
        <begin position="340"/>
        <end position="363"/>
    </location>
</feature>
<organism>
    <name type="scientific">Cryptococcus neoformans var. neoformans serotype D (strain B-3501A)</name>
    <name type="common">Filobasidiella neoformans</name>
    <dbReference type="NCBI Taxonomy" id="283643"/>
    <lineage>
        <taxon>Eukaryota</taxon>
        <taxon>Fungi</taxon>
        <taxon>Dikarya</taxon>
        <taxon>Basidiomycota</taxon>
        <taxon>Agaricomycotina</taxon>
        <taxon>Tremellomycetes</taxon>
        <taxon>Tremellales</taxon>
        <taxon>Cryptococcaceae</taxon>
        <taxon>Cryptococcus</taxon>
        <taxon>Cryptococcus neoformans species complex</taxon>
    </lineage>
</organism>
<proteinExistence type="inferred from homology"/>
<comment type="function">
    <text evidence="1">Plays a central role in 2-thiolation of mcm(5)S(2)U at tRNA wobble positions of tRNA(Lys), tRNA(Glu) and tRNA(Gln). Directly binds tRNAs and probably acts by catalyzing adenylation of tRNAs, an intermediate required for 2-thiolation. It is unclear whether it acts as a sulfurtransferase that transfers sulfur from thiocarboxylated URM1 onto the uridine of tRNAs at wobble position. Prior mcm(5) tRNA modification by the elongator complex is required for 2-thiolation. May also be involved in protein urmylation.</text>
</comment>
<comment type="pathway">
    <text evidence="1">tRNA modification; 5-methoxycarbonylmethyl-2-thiouridine-tRNA biosynthesis.</text>
</comment>
<comment type="subcellular location">
    <subcellularLocation>
        <location evidence="1">Cytoplasm</location>
    </subcellularLocation>
</comment>
<comment type="similarity">
    <text evidence="1">Belongs to the TtcA family. CTU1/NCS6/ATPBD3 subfamily.</text>
</comment>
<sequence>MPPTPCSLCHTARALVKRPKTGQQVCKDCFFEVFETEVHNTIVEGEGIFKRGERVAIGASGGKDSTVLAHVLSVLNKRYDYGLDLYLLSIDEGITGYRDDSLETVKQNQAEYGLPLKILSYSELYGWTMDKIVEQVGKKNNCTFCGVFRRQALDRGAAQLGVDHIVTGHNADDIAETVLMNIMRGDIARLARCTAVTTQSEDTIKRSKPFKYAYEKEIVMYAYFKKLTYFSTECIYSPDAYRGHARVFLKDLEAVRPSAIVDIIHSGESFVLEQSVQRGMKALQTCLRCGYISSNDLCKACALLEGLESGLSRSALRQTQESTSAAPEGHRTIPMFERYASLNGTPRTPPTPAEPVEGIERAA</sequence>
<protein>
    <recommendedName>
        <fullName evidence="1">Cytoplasmic tRNA 2-thiolation protein 1</fullName>
        <ecNumber evidence="1">2.7.7.-</ecNumber>
    </recommendedName>
    <alternativeName>
        <fullName evidence="1">Cytoplasmic tRNA adenylyltransferase 1</fullName>
    </alternativeName>
</protein>
<gene>
    <name evidence="1" type="primary">NCS6</name>
    <name evidence="1" type="synonym">CTU1</name>
    <name type="ordered locus">CNBE4140</name>
</gene>
<evidence type="ECO:0000255" key="1">
    <source>
        <dbReference type="HAMAP-Rule" id="MF_03053"/>
    </source>
</evidence>
<evidence type="ECO:0000256" key="2">
    <source>
        <dbReference type="SAM" id="MobiDB-lite"/>
    </source>
</evidence>
<dbReference type="EC" id="2.7.7.-" evidence="1"/>
<dbReference type="EMBL" id="AAEY01000028">
    <property type="protein sequence ID" value="EAL20493.1"/>
    <property type="molecule type" value="Genomic_DNA"/>
</dbReference>
<dbReference type="RefSeq" id="XP_775140.1">
    <property type="nucleotide sequence ID" value="XM_770047.1"/>
</dbReference>
<dbReference type="SMR" id="P0CS71"/>
<dbReference type="EnsemblFungi" id="AAW43763">
    <property type="protein sequence ID" value="AAW43763"/>
    <property type="gene ID" value="CNE04150"/>
</dbReference>
<dbReference type="GeneID" id="4936425"/>
<dbReference type="KEGG" id="cnb:CNBE4140"/>
<dbReference type="VEuPathDB" id="FungiDB:CNBE4140"/>
<dbReference type="HOGENOM" id="CLU_026481_1_2_1"/>
<dbReference type="OrthoDB" id="1857at5206"/>
<dbReference type="UniPathway" id="UPA00988"/>
<dbReference type="GO" id="GO:0005829">
    <property type="term" value="C:cytosol"/>
    <property type="evidence" value="ECO:0000250"/>
    <property type="project" value="UniProtKB"/>
</dbReference>
<dbReference type="GO" id="GO:0002144">
    <property type="term" value="C:cytosolic tRNA wobble base thiouridylase complex"/>
    <property type="evidence" value="ECO:0007669"/>
    <property type="project" value="EnsemblFungi"/>
</dbReference>
<dbReference type="GO" id="GO:0005739">
    <property type="term" value="C:mitochondrion"/>
    <property type="evidence" value="ECO:0007669"/>
    <property type="project" value="TreeGrafter"/>
</dbReference>
<dbReference type="GO" id="GO:0005777">
    <property type="term" value="C:peroxisome"/>
    <property type="evidence" value="ECO:0007669"/>
    <property type="project" value="EnsemblFungi"/>
</dbReference>
<dbReference type="GO" id="GO:0016779">
    <property type="term" value="F:nucleotidyltransferase activity"/>
    <property type="evidence" value="ECO:0007669"/>
    <property type="project" value="UniProtKB-UniRule"/>
</dbReference>
<dbReference type="GO" id="GO:0000049">
    <property type="term" value="F:tRNA binding"/>
    <property type="evidence" value="ECO:0000250"/>
    <property type="project" value="UniProtKB"/>
</dbReference>
<dbReference type="GO" id="GO:0103016">
    <property type="term" value="F:tRNA-uridine 2-sulfurtransferase activity"/>
    <property type="evidence" value="ECO:0007669"/>
    <property type="project" value="EnsemblFungi"/>
</dbReference>
<dbReference type="GO" id="GO:0032447">
    <property type="term" value="P:protein urmylation"/>
    <property type="evidence" value="ECO:0007669"/>
    <property type="project" value="UniProtKB-UniRule"/>
</dbReference>
<dbReference type="GO" id="GO:0034227">
    <property type="term" value="P:tRNA thio-modification"/>
    <property type="evidence" value="ECO:0000250"/>
    <property type="project" value="UniProtKB"/>
</dbReference>
<dbReference type="GO" id="GO:0002143">
    <property type="term" value="P:tRNA wobble position uridine thiolation"/>
    <property type="evidence" value="ECO:0007669"/>
    <property type="project" value="EnsemblFungi"/>
</dbReference>
<dbReference type="GO" id="GO:0002098">
    <property type="term" value="P:tRNA wobble uridine modification"/>
    <property type="evidence" value="ECO:0000250"/>
    <property type="project" value="UniProtKB"/>
</dbReference>
<dbReference type="CDD" id="cd01713">
    <property type="entry name" value="CTU1-like"/>
    <property type="match status" value="1"/>
</dbReference>
<dbReference type="FunFam" id="3.40.50.620:FF:000054">
    <property type="entry name" value="Cytoplasmic tRNA 2-thiolation protein 1"/>
    <property type="match status" value="1"/>
</dbReference>
<dbReference type="Gene3D" id="3.40.50.620">
    <property type="entry name" value="HUPs"/>
    <property type="match status" value="1"/>
</dbReference>
<dbReference type="HAMAP" id="MF_03053">
    <property type="entry name" value="CTU1"/>
    <property type="match status" value="1"/>
</dbReference>
<dbReference type="InterPro" id="IPR056369">
    <property type="entry name" value="CTU1-like_ATP-bd"/>
</dbReference>
<dbReference type="InterPro" id="IPR032442">
    <property type="entry name" value="CTU1_C"/>
</dbReference>
<dbReference type="InterPro" id="IPR000541">
    <property type="entry name" value="Ncs6/Tuc1/Ctu1"/>
</dbReference>
<dbReference type="InterPro" id="IPR014729">
    <property type="entry name" value="Rossmann-like_a/b/a_fold"/>
</dbReference>
<dbReference type="InterPro" id="IPR011063">
    <property type="entry name" value="TilS/TtcA_N"/>
</dbReference>
<dbReference type="InterPro" id="IPR035107">
    <property type="entry name" value="tRNA_thiolation_TtcA_Ctu1"/>
</dbReference>
<dbReference type="NCBIfam" id="TIGR00269">
    <property type="entry name" value="TIGR00269 family protein"/>
    <property type="match status" value="1"/>
</dbReference>
<dbReference type="PANTHER" id="PTHR11807">
    <property type="entry name" value="ATPASES OF THE PP SUPERFAMILY-RELATED"/>
    <property type="match status" value="1"/>
</dbReference>
<dbReference type="PANTHER" id="PTHR11807:SF12">
    <property type="entry name" value="CYTOPLASMIC TRNA 2-THIOLATION PROTEIN 1"/>
    <property type="match status" value="1"/>
</dbReference>
<dbReference type="Pfam" id="PF01171">
    <property type="entry name" value="ATP_bind_3"/>
    <property type="match status" value="1"/>
</dbReference>
<dbReference type="Pfam" id="PF16503">
    <property type="entry name" value="zn-ribbon_14"/>
    <property type="match status" value="1"/>
</dbReference>
<dbReference type="PIRSF" id="PIRSF004976">
    <property type="entry name" value="ATPase_YdaO"/>
    <property type="match status" value="1"/>
</dbReference>
<dbReference type="SUPFAM" id="SSF52402">
    <property type="entry name" value="Adenine nucleotide alpha hydrolases-like"/>
    <property type="match status" value="1"/>
</dbReference>
<keyword id="KW-0963">Cytoplasm</keyword>
<keyword id="KW-0694">RNA-binding</keyword>
<keyword id="KW-0808">Transferase</keyword>
<keyword id="KW-0819">tRNA processing</keyword>
<keyword id="KW-0820">tRNA-binding</keyword>
<accession>P0CS71</accession>
<accession>Q55RW8</accession>
<accession>Q5KGC1</accession>
<name>CTU1_CRYNB</name>
<reference key="1">
    <citation type="journal article" date="2005" name="Science">
        <title>The genome of the basidiomycetous yeast and human pathogen Cryptococcus neoformans.</title>
        <authorList>
            <person name="Loftus B.J."/>
            <person name="Fung E."/>
            <person name="Roncaglia P."/>
            <person name="Rowley D."/>
            <person name="Amedeo P."/>
            <person name="Bruno D."/>
            <person name="Vamathevan J."/>
            <person name="Miranda M."/>
            <person name="Anderson I.J."/>
            <person name="Fraser J.A."/>
            <person name="Allen J.E."/>
            <person name="Bosdet I.E."/>
            <person name="Brent M.R."/>
            <person name="Chiu R."/>
            <person name="Doering T.L."/>
            <person name="Donlin M.J."/>
            <person name="D'Souza C.A."/>
            <person name="Fox D.S."/>
            <person name="Grinberg V."/>
            <person name="Fu J."/>
            <person name="Fukushima M."/>
            <person name="Haas B.J."/>
            <person name="Huang J.C."/>
            <person name="Janbon G."/>
            <person name="Jones S.J.M."/>
            <person name="Koo H.L."/>
            <person name="Krzywinski M.I."/>
            <person name="Kwon-Chung K.J."/>
            <person name="Lengeler K.B."/>
            <person name="Maiti R."/>
            <person name="Marra M.A."/>
            <person name="Marra R.E."/>
            <person name="Mathewson C.A."/>
            <person name="Mitchell T.G."/>
            <person name="Pertea M."/>
            <person name="Riggs F.R."/>
            <person name="Salzberg S.L."/>
            <person name="Schein J.E."/>
            <person name="Shvartsbeyn A."/>
            <person name="Shin H."/>
            <person name="Shumway M."/>
            <person name="Specht C.A."/>
            <person name="Suh B.B."/>
            <person name="Tenney A."/>
            <person name="Utterback T.R."/>
            <person name="Wickes B.L."/>
            <person name="Wortman J.R."/>
            <person name="Wye N.H."/>
            <person name="Kronstad J.W."/>
            <person name="Lodge J.K."/>
            <person name="Heitman J."/>
            <person name="Davis R.W."/>
            <person name="Fraser C.M."/>
            <person name="Hyman R.W."/>
        </authorList>
    </citation>
    <scope>NUCLEOTIDE SEQUENCE [LARGE SCALE GENOMIC DNA]</scope>
    <source>
        <strain>B-3501A</strain>
    </source>
</reference>